<organism>
    <name type="scientific">Arabidopsis thaliana</name>
    <name type="common">Mouse-ear cress</name>
    <dbReference type="NCBI Taxonomy" id="3702"/>
    <lineage>
        <taxon>Eukaryota</taxon>
        <taxon>Viridiplantae</taxon>
        <taxon>Streptophyta</taxon>
        <taxon>Embryophyta</taxon>
        <taxon>Tracheophyta</taxon>
        <taxon>Spermatophyta</taxon>
        <taxon>Magnoliopsida</taxon>
        <taxon>eudicotyledons</taxon>
        <taxon>Gunneridae</taxon>
        <taxon>Pentapetalae</taxon>
        <taxon>rosids</taxon>
        <taxon>malvids</taxon>
        <taxon>Brassicales</taxon>
        <taxon>Brassicaceae</taxon>
        <taxon>Camelineae</taxon>
        <taxon>Arabidopsis</taxon>
    </lineage>
</organism>
<comment type="function">
    <text evidence="3 4">Might act as an E3 ubiquitin-protein ligase, or as part of E3 complex, which accepts ubiquitin from specific E2 ubiquitin-conjugating enzymes and then transfers it to substrates (PubMed:12446796). Negatively regulates male gametophyte formation and double fertilization (PubMed:20478994).</text>
</comment>
<comment type="catalytic activity">
    <reaction evidence="1">
        <text>[E2 ubiquitin-conjugating enzyme]-S-ubiquitinyl-L-cysteine + [acceptor protein]-L-lysine = [E2 ubiquitin-conjugating enzyme]-L-cysteine + [acceptor protein]-N(6)-ubiquitinyl-L-lysine.</text>
        <dbReference type="EC" id="2.3.2.31"/>
    </reaction>
</comment>
<comment type="cofactor">
    <cofactor evidence="6">
        <name>Zn(2+)</name>
        <dbReference type="ChEBI" id="CHEBI:29105"/>
    </cofactor>
    <text evidence="6">Binds 4 Zn(2+) ions per subunit.</text>
</comment>
<comment type="pathway">
    <text>Protein modification; protein ubiquitination.</text>
</comment>
<comment type="tissue specificity">
    <text evidence="4">Mostly expressed in closed flowers and, to a lower extent, in pollen.</text>
</comment>
<comment type="developmental stage">
    <text evidence="4">During male gametophyte development, strongly expressed in microspores and bicellular pollen, but decrease gradually during pollen maturation in tricellular pollen to finally disappear in mature pollen.</text>
</comment>
<comment type="domain">
    <text evidence="1">Members of the RBR family are atypical E3 ligases. They interact with the E2 conjugating enzyme UBE2L3 and function like HECT-type E3 enzymes: they bind E2s via the first RING-type zinc finger, but require an obligate trans-thiolation step during the ubiquitin transfer, requiring a conserved active site Cys residue in the second RING-type zinc finger. The active site probably forms a thioester intermediate with ubiquitin taken from the active-site cysteine of the E2 before ultimately transferring it to a Lys residue on the substrate.</text>
</comment>
<comment type="miscellaneous">
    <text evidence="4">Transcripts of KPL and ARI14, encoded by adjacent genes organized in a reverse orientation, have the potential to generate natural cis-antisense siRNAs (cis-nat-siRNAs) pair targeting ARI14 in sperm, thus leading to opposite expression levels during male gametophyte development.</text>
</comment>
<comment type="similarity">
    <text evidence="6">Belongs to the RBR family. Ariadne subfamily.</text>
</comment>
<comment type="caution">
    <text evidence="6">Lacks four Cys residues in the RING-type zinc finger domain 1 and two Cys residues in the RING-type zinc finger domain 2 that are conserved features of the family.</text>
</comment>
<gene>
    <name evidence="5" type="primary">ARI14</name>
    <name evidence="7" type="ordered locus">At5g63730</name>
    <name evidence="8" type="ORF">MBK5.21</name>
</gene>
<sequence>MEYDGRRPYSVLTRNEITVKMKKQINEISDIFFISNSDATVLLMYLRWDSLRVSERLGENKEKLLMDSGLKSVMIDPSPDSSSEISLETDVYEFDGDNDLISMPFCSHKFDSKYWREYLEKNFYYVEKIQTTISCPDQDCRSAVGPDTIEKLTVRDQEMYERYIWRSYIEGNKVLMIKQCPARNCDYVIEFHQENDDDDEYSLNVVCICGHIFCWRCRLESHRPVSCNKASDWLCSATMKISDESFSLYPTKTKTVTCPHCLCSLESDTKMPQFLTCVCRLRFCSRCLRSEEAHKIEAVDSGFCIKTEVGILCEDRWNVCQKLLEQAKSDLEAFEETNIKKPSDLLREQDIMIIREGLMLIVQCRRVLKWCCVYDYFHTEYENSKEYLRYLQGNAIATLQSYSNTLQEQKDIVLAAATYEECTFFRHTIPTATSNIGNYFYDFMKTLQDGLVDVKVKSYNGGTGPFWYCDRCTYANTWEDNECEMCYDDSASLVGEISDLFLNKVS</sequence>
<proteinExistence type="evidence at transcript level"/>
<evidence type="ECO:0000250" key="1">
    <source>
        <dbReference type="UniProtKB" id="Q9Y4X5"/>
    </source>
</evidence>
<evidence type="ECO:0000255" key="2">
    <source>
        <dbReference type="PROSITE-ProRule" id="PRU01221"/>
    </source>
</evidence>
<evidence type="ECO:0000269" key="3">
    <source>
    </source>
</evidence>
<evidence type="ECO:0000269" key="4">
    <source>
    </source>
</evidence>
<evidence type="ECO:0000303" key="5">
    <source>
    </source>
</evidence>
<evidence type="ECO:0000305" key="6"/>
<evidence type="ECO:0000312" key="7">
    <source>
        <dbReference type="Araport" id="AT5G63730"/>
    </source>
</evidence>
<evidence type="ECO:0000312" key="8">
    <source>
        <dbReference type="EMBL" id="BAB10466.1"/>
    </source>
</evidence>
<name>ARI14_ARATH</name>
<reference key="1">
    <citation type="journal article" date="2003" name="Plant Physiol.">
        <title>Identification and characterization of the ARIADNE gene family in Arabidopsis. A group of putative E3 ligases.</title>
        <authorList>
            <person name="Mladek C."/>
            <person name="Guger K."/>
            <person name="Hauser M.-T."/>
        </authorList>
    </citation>
    <scope>NUCLEOTIDE SEQUENCE [GENOMIC DNA]</scope>
    <scope>NOMENCLATURE</scope>
    <scope>GENE FAMILY</scope>
    <source>
        <strain>cv. Columbia</strain>
    </source>
</reference>
<reference key="2">
    <citation type="journal article" date="1997" name="DNA Res.">
        <title>Structural analysis of Arabidopsis thaliana chromosome 5. I. Sequence features of the 1.6 Mb regions covered by twenty physically assigned P1 clones.</title>
        <authorList>
            <person name="Sato S."/>
            <person name="Kotani H."/>
            <person name="Nakamura Y."/>
            <person name="Kaneko T."/>
            <person name="Asamizu E."/>
            <person name="Fukami M."/>
            <person name="Miyajima N."/>
            <person name="Tabata S."/>
        </authorList>
    </citation>
    <scope>NUCLEOTIDE SEQUENCE [LARGE SCALE GENOMIC DNA]</scope>
    <source>
        <strain>cv. Columbia</strain>
    </source>
</reference>
<reference key="3">
    <citation type="journal article" date="2017" name="Plant J.">
        <title>Araport11: a complete reannotation of the Arabidopsis thaliana reference genome.</title>
        <authorList>
            <person name="Cheng C.Y."/>
            <person name="Krishnakumar V."/>
            <person name="Chan A.P."/>
            <person name="Thibaud-Nissen F."/>
            <person name="Schobel S."/>
            <person name="Town C.D."/>
        </authorList>
    </citation>
    <scope>GENOME REANNOTATION</scope>
    <source>
        <strain>cv. Columbia</strain>
    </source>
</reference>
<reference key="4">
    <citation type="submission" date="2005-05" db="EMBL/GenBank/DDBJ databases">
        <authorList>
            <person name="Underwood B.A."/>
            <person name="Xiao Y.-L."/>
            <person name="Moskal W.A. Jr."/>
            <person name="Monaghan E.L."/>
            <person name="Wang W."/>
            <person name="Redman J.C."/>
            <person name="Wu H.C."/>
            <person name="Utterback T."/>
            <person name="Town C.D."/>
        </authorList>
    </citation>
    <scope>NUCLEOTIDE SEQUENCE [LARGE SCALE MRNA]</scope>
    <source>
        <strain>cv. Columbia</strain>
    </source>
</reference>
<reference key="5">
    <citation type="journal article" date="2002" name="Mol. Biol. Evol.">
        <title>Comparative genomics of the RBR family, including the Parkinson's disease-related gene parkin and the genes of the ariadne subfamily.</title>
        <authorList>
            <person name="Marin I."/>
            <person name="Ferrus A."/>
        </authorList>
    </citation>
    <scope>FUNCTION</scope>
</reference>
<reference key="6">
    <citation type="journal article" date="2010" name="Genes Dev.">
        <title>Proper regulation of a sperm-specific cis-nat-siRNA is essential for double fertilization in Arabidopsis.</title>
        <authorList>
            <person name="Ron M."/>
            <person name="Alandete Saez M."/>
            <person name="Eshed Williams L."/>
            <person name="Fletcher J.C."/>
            <person name="McCormick S."/>
        </authorList>
    </citation>
    <scope>FUNCTION</scope>
    <scope>TISSUE SPECIFICITY</scope>
    <scope>DEVELOPMENTAL STAGE</scope>
</reference>
<feature type="chain" id="PRO_0000356207" description="Probable E3 ubiquitin-protein ligase ARI14">
    <location>
        <begin position="1"/>
        <end position="506"/>
    </location>
</feature>
<feature type="zinc finger region" description="RING-type 1" evidence="2">
    <location>
        <begin position="83"/>
        <end position="140"/>
    </location>
</feature>
<feature type="zinc finger region" description="IBR-type" evidence="2">
    <location>
        <begin position="158"/>
        <end position="227"/>
    </location>
</feature>
<feature type="zinc finger region" description="RING-type 2; atypical" evidence="2">
    <location>
        <begin position="258"/>
        <end position="287"/>
    </location>
</feature>
<feature type="zinc finger region" description="RanBP2-type">
    <location>
        <begin position="462"/>
        <end position="492"/>
    </location>
</feature>
<feature type="region of interest" description="TRIAD supradomain" evidence="2">
    <location>
        <begin position="79"/>
        <end position="308"/>
    </location>
</feature>
<feature type="binding site" evidence="2">
    <location>
        <position position="106"/>
    </location>
    <ligand>
        <name>Zn(2+)</name>
        <dbReference type="ChEBI" id="CHEBI:29105"/>
        <label>1</label>
    </ligand>
</feature>
<feature type="binding site" evidence="2">
    <location>
        <position position="108"/>
    </location>
    <ligand>
        <name>Zn(2+)</name>
        <dbReference type="ChEBI" id="CHEBI:29105"/>
        <label>1</label>
    </ligand>
</feature>
<feature type="binding site" evidence="2">
    <location>
        <position position="135"/>
    </location>
    <ligand>
        <name>Zn(2+)</name>
        <dbReference type="ChEBI" id="CHEBI:29105"/>
        <label>1</label>
    </ligand>
</feature>
<feature type="binding site" evidence="2">
    <location>
        <position position="140"/>
    </location>
    <ligand>
        <name>Zn(2+)</name>
        <dbReference type="ChEBI" id="CHEBI:29105"/>
        <label>1</label>
    </ligand>
</feature>
<feature type="binding site" evidence="2">
    <location>
        <position position="180"/>
    </location>
    <ligand>
        <name>Zn(2+)</name>
        <dbReference type="ChEBI" id="CHEBI:29105"/>
        <label>2</label>
    </ligand>
</feature>
<feature type="binding site" evidence="2">
    <location>
        <position position="185"/>
    </location>
    <ligand>
        <name>Zn(2+)</name>
        <dbReference type="ChEBI" id="CHEBI:29105"/>
        <label>2</label>
    </ligand>
</feature>
<feature type="binding site" evidence="2">
    <location>
        <position position="207"/>
    </location>
    <ligand>
        <name>Zn(2+)</name>
        <dbReference type="ChEBI" id="CHEBI:29105"/>
        <label>2</label>
    </ligand>
</feature>
<feature type="binding site" evidence="2">
    <location>
        <position position="209"/>
    </location>
    <ligand>
        <name>Zn(2+)</name>
        <dbReference type="ChEBI" id="CHEBI:29105"/>
        <label>2</label>
    </ligand>
</feature>
<feature type="binding site" evidence="2">
    <location>
        <position position="214"/>
    </location>
    <ligand>
        <name>Zn(2+)</name>
        <dbReference type="ChEBI" id="CHEBI:29105"/>
        <label>3</label>
    </ligand>
</feature>
<feature type="binding site" evidence="2">
    <location>
        <position position="217"/>
    </location>
    <ligand>
        <name>Zn(2+)</name>
        <dbReference type="ChEBI" id="CHEBI:29105"/>
        <label>3</label>
    </ligand>
</feature>
<feature type="binding site" evidence="2">
    <location>
        <position position="222"/>
    </location>
    <ligand>
        <name>Zn(2+)</name>
        <dbReference type="ChEBI" id="CHEBI:29105"/>
        <label>3</label>
    </ligand>
</feature>
<feature type="binding site" evidence="2">
    <location>
        <position position="227"/>
    </location>
    <ligand>
        <name>Zn(2+)</name>
        <dbReference type="ChEBI" id="CHEBI:29105"/>
        <label>3</label>
    </ligand>
</feature>
<feature type="binding site" evidence="2">
    <location>
        <position position="258"/>
    </location>
    <ligand>
        <name>Zn(2+)</name>
        <dbReference type="ChEBI" id="CHEBI:29105"/>
        <label>4</label>
    </ligand>
</feature>
<feature type="binding site" evidence="2">
    <location>
        <position position="261"/>
    </location>
    <ligand>
        <name>Zn(2+)</name>
        <dbReference type="ChEBI" id="CHEBI:29105"/>
        <label>4</label>
    </ligand>
</feature>
<feature type="binding site" evidence="2">
    <location>
        <position position="277"/>
    </location>
    <ligand>
        <name>Zn(2+)</name>
        <dbReference type="ChEBI" id="CHEBI:29105"/>
        <label>4</label>
    </ligand>
</feature>
<feature type="binding site" evidence="2">
    <location>
        <position position="279"/>
    </location>
    <ligand>
        <name>Zn(2+)</name>
        <dbReference type="ChEBI" id="CHEBI:29105"/>
        <label>4</label>
    </ligand>
</feature>
<feature type="binding site" evidence="2">
    <location>
        <position position="284"/>
    </location>
    <ligand>
        <name>Zn(2+)</name>
        <dbReference type="ChEBI" id="CHEBI:29105"/>
        <label>5</label>
    </ligand>
</feature>
<feature type="binding site" evidence="2">
    <location>
        <position position="287"/>
    </location>
    <ligand>
        <name>Zn(2+)</name>
        <dbReference type="ChEBI" id="CHEBI:29105"/>
        <label>5</label>
    </ligand>
</feature>
<feature type="binding site" evidence="2">
    <location>
        <position position="294"/>
    </location>
    <ligand>
        <name>Zn(2+)</name>
        <dbReference type="ChEBI" id="CHEBI:29105"/>
        <label>5</label>
    </ligand>
</feature>
<feature type="binding site" evidence="2">
    <location>
        <position position="304"/>
    </location>
    <ligand>
        <name>Zn(2+)</name>
        <dbReference type="ChEBI" id="CHEBI:29105"/>
        <label>5</label>
    </ligand>
</feature>
<protein>
    <recommendedName>
        <fullName evidence="5">Probable E3 ubiquitin-protein ligase ARI14</fullName>
        <ecNumber evidence="1">2.3.2.31</ecNumber>
    </recommendedName>
    <alternativeName>
        <fullName evidence="5">ARIADNE-like protein ARI14</fullName>
    </alternativeName>
    <alternativeName>
        <fullName evidence="5">Protein ariadne homolog 14</fullName>
    </alternativeName>
    <alternativeName>
        <fullName evidence="6">RING-type E3 ubiquitin transferase ARI14</fullName>
    </alternativeName>
</protein>
<keyword id="KW-0217">Developmental protein</keyword>
<keyword id="KW-0278">Fertilization</keyword>
<keyword id="KW-0479">Metal-binding</keyword>
<keyword id="KW-1185">Reference proteome</keyword>
<keyword id="KW-0677">Repeat</keyword>
<keyword id="KW-0808">Transferase</keyword>
<keyword id="KW-0833">Ubl conjugation pathway</keyword>
<keyword id="KW-0862">Zinc</keyword>
<keyword id="KW-0863">Zinc-finger</keyword>
<accession>Q9FFP1</accession>
<dbReference type="EC" id="2.3.2.31" evidence="1"/>
<dbReference type="EMBL" id="AJ510217">
    <property type="protein sequence ID" value="CAD52896.1"/>
    <property type="molecule type" value="Genomic_DNA"/>
</dbReference>
<dbReference type="EMBL" id="AB005234">
    <property type="protein sequence ID" value="BAB10466.1"/>
    <property type="molecule type" value="Genomic_DNA"/>
</dbReference>
<dbReference type="EMBL" id="CP002688">
    <property type="protein sequence ID" value="AED97790.1"/>
    <property type="molecule type" value="Genomic_DNA"/>
</dbReference>
<dbReference type="EMBL" id="DQ056737">
    <property type="protein sequence ID" value="AAY78881.1"/>
    <property type="molecule type" value="mRNA"/>
</dbReference>
<dbReference type="RefSeq" id="NP_201178.1">
    <property type="nucleotide sequence ID" value="NM_125768.1"/>
</dbReference>
<dbReference type="SMR" id="Q9FFP1"/>
<dbReference type="STRING" id="3702.Q9FFP1"/>
<dbReference type="PaxDb" id="3702-AT5G63730.1"/>
<dbReference type="EnsemblPlants" id="AT5G63730.1">
    <property type="protein sequence ID" value="AT5G63730.1"/>
    <property type="gene ID" value="AT5G63730"/>
</dbReference>
<dbReference type="GeneID" id="836493"/>
<dbReference type="Gramene" id="AT5G63730.1">
    <property type="protein sequence ID" value="AT5G63730.1"/>
    <property type="gene ID" value="AT5G63730"/>
</dbReference>
<dbReference type="KEGG" id="ath:AT5G63730"/>
<dbReference type="Araport" id="AT5G63730"/>
<dbReference type="TAIR" id="AT5G63730">
    <property type="gene designation" value="ARI14"/>
</dbReference>
<dbReference type="eggNOG" id="KOG1815">
    <property type="taxonomic scope" value="Eukaryota"/>
</dbReference>
<dbReference type="HOGENOM" id="CLU_009823_3_2_1"/>
<dbReference type="InParanoid" id="Q9FFP1"/>
<dbReference type="OMA" id="WEDNECE"/>
<dbReference type="PhylomeDB" id="Q9FFP1"/>
<dbReference type="UniPathway" id="UPA00143"/>
<dbReference type="PRO" id="PR:Q9FFP1"/>
<dbReference type="Proteomes" id="UP000006548">
    <property type="component" value="Chromosome 5"/>
</dbReference>
<dbReference type="ExpressionAtlas" id="Q9FFP1">
    <property type="expression patterns" value="baseline and differential"/>
</dbReference>
<dbReference type="GO" id="GO:0004842">
    <property type="term" value="F:ubiquitin-protein transferase activity"/>
    <property type="evidence" value="ECO:0007669"/>
    <property type="project" value="InterPro"/>
</dbReference>
<dbReference type="GO" id="GO:0008270">
    <property type="term" value="F:zinc ion binding"/>
    <property type="evidence" value="ECO:0007669"/>
    <property type="project" value="UniProtKB-KW"/>
</dbReference>
<dbReference type="GO" id="GO:0016567">
    <property type="term" value="P:protein ubiquitination"/>
    <property type="evidence" value="ECO:0007669"/>
    <property type="project" value="UniProtKB-UniPathway"/>
</dbReference>
<dbReference type="GO" id="GO:0080155">
    <property type="term" value="P:regulation of double fertilization forming a zygote and endosperm"/>
    <property type="evidence" value="ECO:0000315"/>
    <property type="project" value="TAIR"/>
</dbReference>
<dbReference type="CDD" id="cd20346">
    <property type="entry name" value="BRcat_RBR_ANKIB1"/>
    <property type="match status" value="1"/>
</dbReference>
<dbReference type="FunFam" id="3.30.40.10:FF:000892">
    <property type="entry name" value="Probable E3 ubiquitin-protein ligase ARI15"/>
    <property type="match status" value="1"/>
</dbReference>
<dbReference type="Gene3D" id="1.20.120.1750">
    <property type="match status" value="1"/>
</dbReference>
<dbReference type="Gene3D" id="3.30.40.10">
    <property type="entry name" value="Zinc/RING finger domain, C3HC4 (zinc finger)"/>
    <property type="match status" value="1"/>
</dbReference>
<dbReference type="InterPro" id="IPR048962">
    <property type="entry name" value="ARIH1-like_UBL"/>
</dbReference>
<dbReference type="InterPro" id="IPR031127">
    <property type="entry name" value="E3_UB_ligase_RBR"/>
</dbReference>
<dbReference type="InterPro" id="IPR002867">
    <property type="entry name" value="IBR_dom"/>
</dbReference>
<dbReference type="InterPro" id="IPR044066">
    <property type="entry name" value="TRIAD_supradom"/>
</dbReference>
<dbReference type="InterPro" id="IPR001876">
    <property type="entry name" value="Znf_RanBP2"/>
</dbReference>
<dbReference type="InterPro" id="IPR013083">
    <property type="entry name" value="Znf_RING/FYVE/PHD"/>
</dbReference>
<dbReference type="PANTHER" id="PTHR11685">
    <property type="entry name" value="RBR FAMILY RING FINGER AND IBR DOMAIN-CONTAINING"/>
    <property type="match status" value="1"/>
</dbReference>
<dbReference type="Pfam" id="PF01485">
    <property type="entry name" value="IBR"/>
    <property type="match status" value="1"/>
</dbReference>
<dbReference type="Pfam" id="PF21235">
    <property type="entry name" value="UBA_ARI1"/>
    <property type="match status" value="1"/>
</dbReference>
<dbReference type="SMART" id="SM00647">
    <property type="entry name" value="IBR"/>
    <property type="match status" value="1"/>
</dbReference>
<dbReference type="SUPFAM" id="SSF57850">
    <property type="entry name" value="RING/U-box"/>
    <property type="match status" value="2"/>
</dbReference>
<dbReference type="PROSITE" id="PS51873">
    <property type="entry name" value="TRIAD"/>
    <property type="match status" value="1"/>
</dbReference>
<dbReference type="PROSITE" id="PS01358">
    <property type="entry name" value="ZF_RANBP2_1"/>
    <property type="match status" value="1"/>
</dbReference>